<evidence type="ECO:0000250" key="1">
    <source>
        <dbReference type="UniProtKB" id="P02086"/>
    </source>
</evidence>
<evidence type="ECO:0000250" key="2">
    <source>
        <dbReference type="UniProtKB" id="P68871"/>
    </source>
</evidence>
<evidence type="ECO:0000255" key="3">
    <source>
        <dbReference type="PROSITE-ProRule" id="PRU00238"/>
    </source>
</evidence>
<evidence type="ECO:0000269" key="4">
    <source>
    </source>
</evidence>
<evidence type="ECO:0000305" key="5"/>
<comment type="function">
    <text>Involved in oxygen transport from the lung to the various peripheral tissues.</text>
</comment>
<comment type="subunit">
    <text>Heterotetramer of two alpha chains and two beta chains.</text>
</comment>
<comment type="tissue specificity">
    <text>Red blood cells.</text>
</comment>
<comment type="similarity">
    <text evidence="3">Belongs to the globin family.</text>
</comment>
<organism>
    <name type="scientific">Bradypus tridactylus</name>
    <name type="common">Pale-throated three-toed sloth</name>
    <dbReference type="NCBI Taxonomy" id="9354"/>
    <lineage>
        <taxon>Eukaryota</taxon>
        <taxon>Metazoa</taxon>
        <taxon>Chordata</taxon>
        <taxon>Craniata</taxon>
        <taxon>Vertebrata</taxon>
        <taxon>Euteleostomi</taxon>
        <taxon>Mammalia</taxon>
        <taxon>Eutheria</taxon>
        <taxon>Xenarthra</taxon>
        <taxon>Pilosa</taxon>
        <taxon>Folivora</taxon>
        <taxon>Bradypodidae</taxon>
        <taxon>Bradypus</taxon>
    </lineage>
</organism>
<gene>
    <name type="primary">HBB</name>
</gene>
<reference key="1">
    <citation type="submission" date="2005-06" db="EMBL/GenBank/DDBJ databases">
        <title>Atypical molecular evolution of afrotherian and xenarthran beta-globin cluster genes.</title>
        <authorList>
            <person name="Sloan A.M."/>
            <person name="Campbell K.L."/>
        </authorList>
    </citation>
    <scope>NUCLEOTIDE SEQUENCE [GENOMIC DNA]</scope>
</reference>
<reference key="2">
    <citation type="journal article" date="1989" name="Biol. Chem. Hoppe-Seyler">
        <title>The primary structure of pale-throated three-toed sloth (Bradypus tridactylus, Xenarthra) hemoglobin.</title>
        <authorList>
            <person name="Kleinschmidt T."/>
            <person name="Marz J."/>
            <person name="Braunitzer G."/>
        </authorList>
    </citation>
    <scope>PROTEIN SEQUENCE OF 2-147</scope>
</reference>
<keyword id="KW-0007">Acetylation</keyword>
<keyword id="KW-0903">Direct protein sequencing</keyword>
<keyword id="KW-0349">Heme</keyword>
<keyword id="KW-0408">Iron</keyword>
<keyword id="KW-0479">Metal-binding</keyword>
<keyword id="KW-0561">Oxygen transport</keyword>
<keyword id="KW-0597">Phosphoprotein</keyword>
<keyword id="KW-0702">S-nitrosylation</keyword>
<keyword id="KW-0813">Transport</keyword>
<sequence length="147" mass="16282">MVHLADDEKAAVSALWHKVHVEEFGGEALGRLLVVYPWTSRFFESFGDLSSADAVFSNAKVKAHGKKVLTSFGEGLKHLDDLKGTYAHLSELHCDKLHVDPENFKLLGNVLVIVLARHFGKEFTPQLQAAYQKVTTGVSTALAHKYH</sequence>
<feature type="initiator methionine" description="Removed" evidence="1 4">
    <location>
        <position position="1"/>
    </location>
</feature>
<feature type="chain" id="PRO_0000052897" description="Hemoglobin subunit beta">
    <location>
        <begin position="2"/>
        <end position="147"/>
    </location>
</feature>
<feature type="domain" description="Globin" evidence="3">
    <location>
        <begin position="3"/>
        <end position="147"/>
    </location>
</feature>
<feature type="binding site" description="distal binding residue">
    <location>
        <position position="64"/>
    </location>
    <ligand>
        <name>heme b</name>
        <dbReference type="ChEBI" id="CHEBI:60344"/>
    </ligand>
    <ligandPart>
        <name>Fe</name>
        <dbReference type="ChEBI" id="CHEBI:18248"/>
    </ligandPart>
</feature>
<feature type="binding site" description="proximal binding residue">
    <location>
        <position position="93"/>
    </location>
    <ligand>
        <name>heme b</name>
        <dbReference type="ChEBI" id="CHEBI:60344"/>
    </ligand>
    <ligandPart>
        <name>Fe</name>
        <dbReference type="ChEBI" id="CHEBI:18248"/>
    </ligandPart>
</feature>
<feature type="modified residue" description="N-acetylvaline" evidence="1">
    <location>
        <position position="2"/>
    </location>
</feature>
<feature type="modified residue" description="Phosphoserine" evidence="2">
    <location>
        <position position="45"/>
    </location>
</feature>
<feature type="modified residue" description="N6-acetyllysine" evidence="2">
    <location>
        <position position="60"/>
    </location>
</feature>
<feature type="modified residue" description="N6-acetyllysine" evidence="2">
    <location>
        <position position="83"/>
    </location>
</feature>
<feature type="modified residue" description="S-nitrosocysteine" evidence="2">
    <location>
        <position position="94"/>
    </location>
</feature>
<feature type="modified residue" description="N6-acetyllysine" evidence="2">
    <location>
        <position position="145"/>
    </location>
</feature>
<feature type="sequence conflict" description="In Ref. 2; AA sequence." evidence="5" ref="2">
    <original>H</original>
    <variation>N</variation>
    <location>
        <position position="17"/>
    </location>
</feature>
<feature type="sequence conflict" description="In Ref. 2; AA sequence." evidence="5" ref="2">
    <original>A</original>
    <variation>S</variation>
    <location>
        <position position="130"/>
    </location>
</feature>
<name>HBB_BRATR</name>
<dbReference type="EMBL" id="DQ091214">
    <property type="protein sequence ID" value="AAZ22685.1"/>
    <property type="molecule type" value="Genomic_DNA"/>
</dbReference>
<dbReference type="PIR" id="S03999">
    <property type="entry name" value="HBOWP"/>
</dbReference>
<dbReference type="SMR" id="P14526"/>
<dbReference type="GO" id="GO:0072562">
    <property type="term" value="C:blood microparticle"/>
    <property type="evidence" value="ECO:0007669"/>
    <property type="project" value="TreeGrafter"/>
</dbReference>
<dbReference type="GO" id="GO:0031838">
    <property type="term" value="C:haptoglobin-hemoglobin complex"/>
    <property type="evidence" value="ECO:0007669"/>
    <property type="project" value="TreeGrafter"/>
</dbReference>
<dbReference type="GO" id="GO:0005833">
    <property type="term" value="C:hemoglobin complex"/>
    <property type="evidence" value="ECO:0007669"/>
    <property type="project" value="InterPro"/>
</dbReference>
<dbReference type="GO" id="GO:0031720">
    <property type="term" value="F:haptoglobin binding"/>
    <property type="evidence" value="ECO:0007669"/>
    <property type="project" value="TreeGrafter"/>
</dbReference>
<dbReference type="GO" id="GO:0020037">
    <property type="term" value="F:heme binding"/>
    <property type="evidence" value="ECO:0007669"/>
    <property type="project" value="InterPro"/>
</dbReference>
<dbReference type="GO" id="GO:0031721">
    <property type="term" value="F:hemoglobin alpha binding"/>
    <property type="evidence" value="ECO:0007669"/>
    <property type="project" value="TreeGrafter"/>
</dbReference>
<dbReference type="GO" id="GO:0046872">
    <property type="term" value="F:metal ion binding"/>
    <property type="evidence" value="ECO:0007669"/>
    <property type="project" value="UniProtKB-KW"/>
</dbReference>
<dbReference type="GO" id="GO:0043177">
    <property type="term" value="F:organic acid binding"/>
    <property type="evidence" value="ECO:0007669"/>
    <property type="project" value="TreeGrafter"/>
</dbReference>
<dbReference type="GO" id="GO:0019825">
    <property type="term" value="F:oxygen binding"/>
    <property type="evidence" value="ECO:0007669"/>
    <property type="project" value="InterPro"/>
</dbReference>
<dbReference type="GO" id="GO:0005344">
    <property type="term" value="F:oxygen carrier activity"/>
    <property type="evidence" value="ECO:0007669"/>
    <property type="project" value="UniProtKB-KW"/>
</dbReference>
<dbReference type="GO" id="GO:0004601">
    <property type="term" value="F:peroxidase activity"/>
    <property type="evidence" value="ECO:0007669"/>
    <property type="project" value="TreeGrafter"/>
</dbReference>
<dbReference type="GO" id="GO:0042744">
    <property type="term" value="P:hydrogen peroxide catabolic process"/>
    <property type="evidence" value="ECO:0007669"/>
    <property type="project" value="TreeGrafter"/>
</dbReference>
<dbReference type="CDD" id="cd08925">
    <property type="entry name" value="Hb-beta-like"/>
    <property type="match status" value="1"/>
</dbReference>
<dbReference type="FunFam" id="1.10.490.10:FF:000001">
    <property type="entry name" value="Hemoglobin subunit beta"/>
    <property type="match status" value="1"/>
</dbReference>
<dbReference type="Gene3D" id="1.10.490.10">
    <property type="entry name" value="Globins"/>
    <property type="match status" value="1"/>
</dbReference>
<dbReference type="InterPro" id="IPR000971">
    <property type="entry name" value="Globin"/>
</dbReference>
<dbReference type="InterPro" id="IPR009050">
    <property type="entry name" value="Globin-like_sf"/>
</dbReference>
<dbReference type="InterPro" id="IPR012292">
    <property type="entry name" value="Globin/Proto"/>
</dbReference>
<dbReference type="InterPro" id="IPR002337">
    <property type="entry name" value="Hemoglobin_b"/>
</dbReference>
<dbReference type="InterPro" id="IPR050056">
    <property type="entry name" value="Hemoglobin_oxygen_transport"/>
</dbReference>
<dbReference type="PANTHER" id="PTHR11442">
    <property type="entry name" value="HEMOGLOBIN FAMILY MEMBER"/>
    <property type="match status" value="1"/>
</dbReference>
<dbReference type="PANTHER" id="PTHR11442:SF42">
    <property type="entry name" value="HEMOGLOBIN SUBUNIT BETA"/>
    <property type="match status" value="1"/>
</dbReference>
<dbReference type="Pfam" id="PF00042">
    <property type="entry name" value="Globin"/>
    <property type="match status" value="1"/>
</dbReference>
<dbReference type="PRINTS" id="PR00814">
    <property type="entry name" value="BETAHAEM"/>
</dbReference>
<dbReference type="SUPFAM" id="SSF46458">
    <property type="entry name" value="Globin-like"/>
    <property type="match status" value="1"/>
</dbReference>
<dbReference type="PROSITE" id="PS01033">
    <property type="entry name" value="GLOBIN"/>
    <property type="match status" value="1"/>
</dbReference>
<proteinExistence type="evidence at protein level"/>
<accession>P14526</accession>
<accession>Q45XH9</accession>
<protein>
    <recommendedName>
        <fullName>Hemoglobin subunit beta</fullName>
    </recommendedName>
    <alternativeName>
        <fullName>Beta-globin</fullName>
    </alternativeName>
    <alternativeName>
        <fullName>Hemoglobin beta chain</fullName>
    </alternativeName>
</protein>